<sequence>MVTWIRGEELHARTKEWARSHVKRLEEVGITPKLAVLLLNDDPVELETQRRFVTLKARDVREIGGEVEIYELYSAPPERRTKEALRLIESLNRRDDVTGVIIQKPLPPFVDEKALFSALSPEKDVDALTPENKKRLLTDFDLDRDVLPCTPAGILELFKLYGIDVRGKDVVVVGKGELVGKPLAVMLMQLDATVTVLHALSKEREPYVKRADIVISAVGRPPELYKDNPWRLTGDMIKEGAVVVGVGGKVDPATKRWFFDVDEKSVAEKASYLTPNIGGVGLATRARVLKNLIRTTYQVAQRVLSPRLYEV</sequence>
<proteinExistence type="inferred from homology"/>
<comment type="function">
    <text evidence="1">Catalyzes the oxidation of 5,10-methylenetetrahydrofolate to 5,10-methenyltetrahydrofolate and then the hydrolysis of 5,10-methenyltetrahydrofolate to 10-formyltetrahydrofolate.</text>
</comment>
<comment type="catalytic activity">
    <reaction evidence="1">
        <text>(6R)-5,10-methylene-5,6,7,8-tetrahydrofolate + NADP(+) = (6R)-5,10-methenyltetrahydrofolate + NADPH</text>
        <dbReference type="Rhea" id="RHEA:22812"/>
        <dbReference type="ChEBI" id="CHEBI:15636"/>
        <dbReference type="ChEBI" id="CHEBI:57455"/>
        <dbReference type="ChEBI" id="CHEBI:57783"/>
        <dbReference type="ChEBI" id="CHEBI:58349"/>
        <dbReference type="EC" id="1.5.1.5"/>
    </reaction>
</comment>
<comment type="catalytic activity">
    <reaction evidence="1">
        <text>(6R)-5,10-methenyltetrahydrofolate + H2O = (6R)-10-formyltetrahydrofolate + H(+)</text>
        <dbReference type="Rhea" id="RHEA:23700"/>
        <dbReference type="ChEBI" id="CHEBI:15377"/>
        <dbReference type="ChEBI" id="CHEBI:15378"/>
        <dbReference type="ChEBI" id="CHEBI:57455"/>
        <dbReference type="ChEBI" id="CHEBI:195366"/>
        <dbReference type="EC" id="3.5.4.9"/>
    </reaction>
</comment>
<comment type="pathway">
    <text evidence="1">One-carbon metabolism; tetrahydrofolate interconversion.</text>
</comment>
<comment type="subunit">
    <text evidence="1">Homodimer.</text>
</comment>
<comment type="similarity">
    <text evidence="1">Belongs to the tetrahydrofolate dehydrogenase/cyclohydrolase family.</text>
</comment>
<reference key="1">
    <citation type="journal article" date="2002" name="Proc. Natl. Acad. Sci. U.S.A.">
        <title>Genome sequence of the hyperthermophilic crenarchaeon Pyrobaculum aerophilum.</title>
        <authorList>
            <person name="Fitz-Gibbon S.T."/>
            <person name="Ladner H."/>
            <person name="Kim U.-J."/>
            <person name="Stetter K.O."/>
            <person name="Simon M.I."/>
            <person name="Miller J.H."/>
        </authorList>
    </citation>
    <scope>NUCLEOTIDE SEQUENCE [LARGE SCALE GENOMIC DNA]</scope>
    <source>
        <strain>ATCC 51768 / DSM 7523 / JCM 9630 / CIP 104966 / NBRC 100827 / IM2</strain>
    </source>
</reference>
<feature type="chain" id="PRO_0000268589" description="Bifunctional protein FolD">
    <location>
        <begin position="1"/>
        <end position="311"/>
    </location>
</feature>
<feature type="binding site" evidence="1">
    <location>
        <begin position="174"/>
        <end position="176"/>
    </location>
    <ligand>
        <name>NADP(+)</name>
        <dbReference type="ChEBI" id="CHEBI:58349"/>
    </ligand>
</feature>
<dbReference type="EC" id="1.5.1.5" evidence="1"/>
<dbReference type="EC" id="3.5.4.9" evidence="1"/>
<dbReference type="EMBL" id="AE009441">
    <property type="protein sequence ID" value="AAL62638.1"/>
    <property type="molecule type" value="Genomic_DNA"/>
</dbReference>
<dbReference type="RefSeq" id="WP_011007110.1">
    <property type="nucleotide sequence ID" value="NC_003364.1"/>
</dbReference>
<dbReference type="SMR" id="Q8ZZK1"/>
<dbReference type="STRING" id="178306.PAE0220"/>
<dbReference type="EnsemblBacteria" id="AAL62638">
    <property type="protein sequence ID" value="AAL62638"/>
    <property type="gene ID" value="PAE0220"/>
</dbReference>
<dbReference type="GeneID" id="1464856"/>
<dbReference type="KEGG" id="pai:PAE0220"/>
<dbReference type="PATRIC" id="fig|178306.9.peg.160"/>
<dbReference type="eggNOG" id="arCOG04538">
    <property type="taxonomic scope" value="Archaea"/>
</dbReference>
<dbReference type="HOGENOM" id="CLU_034045_2_1_2"/>
<dbReference type="InParanoid" id="Q8ZZK1"/>
<dbReference type="UniPathway" id="UPA00193"/>
<dbReference type="Proteomes" id="UP000002439">
    <property type="component" value="Chromosome"/>
</dbReference>
<dbReference type="GO" id="GO:0005829">
    <property type="term" value="C:cytosol"/>
    <property type="evidence" value="ECO:0000318"/>
    <property type="project" value="GO_Central"/>
</dbReference>
<dbReference type="GO" id="GO:0004477">
    <property type="term" value="F:methenyltetrahydrofolate cyclohydrolase activity"/>
    <property type="evidence" value="ECO:0000318"/>
    <property type="project" value="GO_Central"/>
</dbReference>
<dbReference type="GO" id="GO:0004488">
    <property type="term" value="F:methylenetetrahydrofolate dehydrogenase (NADP+) activity"/>
    <property type="evidence" value="ECO:0000318"/>
    <property type="project" value="GO_Central"/>
</dbReference>
<dbReference type="GO" id="GO:0000105">
    <property type="term" value="P:L-histidine biosynthetic process"/>
    <property type="evidence" value="ECO:0007669"/>
    <property type="project" value="UniProtKB-KW"/>
</dbReference>
<dbReference type="GO" id="GO:0009086">
    <property type="term" value="P:methionine biosynthetic process"/>
    <property type="evidence" value="ECO:0007669"/>
    <property type="project" value="UniProtKB-KW"/>
</dbReference>
<dbReference type="GO" id="GO:0006164">
    <property type="term" value="P:purine nucleotide biosynthetic process"/>
    <property type="evidence" value="ECO:0007669"/>
    <property type="project" value="UniProtKB-KW"/>
</dbReference>
<dbReference type="GO" id="GO:0035999">
    <property type="term" value="P:tetrahydrofolate interconversion"/>
    <property type="evidence" value="ECO:0000318"/>
    <property type="project" value="GO_Central"/>
</dbReference>
<dbReference type="CDD" id="cd01080">
    <property type="entry name" value="NAD_bind_m-THF_DH_Cyclohyd"/>
    <property type="match status" value="1"/>
</dbReference>
<dbReference type="FunFam" id="3.40.50.720:FF:000908">
    <property type="entry name" value="Methenyl tetrahydrofolate cyclohydrolase / NADP-dependent methylene H4F dehydrogenase"/>
    <property type="match status" value="1"/>
</dbReference>
<dbReference type="Gene3D" id="3.40.50.10860">
    <property type="entry name" value="Leucine Dehydrogenase, chain A, domain 1"/>
    <property type="match status" value="1"/>
</dbReference>
<dbReference type="Gene3D" id="3.40.50.720">
    <property type="entry name" value="NAD(P)-binding Rossmann-like Domain"/>
    <property type="match status" value="1"/>
</dbReference>
<dbReference type="HAMAP" id="MF_01576">
    <property type="entry name" value="THF_DHG_CYH"/>
    <property type="match status" value="1"/>
</dbReference>
<dbReference type="InterPro" id="IPR046346">
    <property type="entry name" value="Aminoacid_DH-like_N_sf"/>
</dbReference>
<dbReference type="InterPro" id="IPR036291">
    <property type="entry name" value="NAD(P)-bd_dom_sf"/>
</dbReference>
<dbReference type="InterPro" id="IPR000672">
    <property type="entry name" value="THF_DH/CycHdrlase"/>
</dbReference>
<dbReference type="InterPro" id="IPR020630">
    <property type="entry name" value="THF_DH/CycHdrlase_cat_dom"/>
</dbReference>
<dbReference type="InterPro" id="IPR020631">
    <property type="entry name" value="THF_DH/CycHdrlase_NAD-bd_dom"/>
</dbReference>
<dbReference type="PANTHER" id="PTHR48099:SF5">
    <property type="entry name" value="C-1-TETRAHYDROFOLATE SYNTHASE, CYTOPLASMIC"/>
    <property type="match status" value="1"/>
</dbReference>
<dbReference type="PANTHER" id="PTHR48099">
    <property type="entry name" value="C-1-TETRAHYDROFOLATE SYNTHASE, CYTOPLASMIC-RELATED"/>
    <property type="match status" value="1"/>
</dbReference>
<dbReference type="Pfam" id="PF00763">
    <property type="entry name" value="THF_DHG_CYH"/>
    <property type="match status" value="1"/>
</dbReference>
<dbReference type="Pfam" id="PF02882">
    <property type="entry name" value="THF_DHG_CYH_C"/>
    <property type="match status" value="1"/>
</dbReference>
<dbReference type="PRINTS" id="PR00085">
    <property type="entry name" value="THFDHDRGNASE"/>
</dbReference>
<dbReference type="SUPFAM" id="SSF53223">
    <property type="entry name" value="Aminoacid dehydrogenase-like, N-terminal domain"/>
    <property type="match status" value="1"/>
</dbReference>
<dbReference type="SUPFAM" id="SSF51735">
    <property type="entry name" value="NAD(P)-binding Rossmann-fold domains"/>
    <property type="match status" value="1"/>
</dbReference>
<protein>
    <recommendedName>
        <fullName evidence="1">Bifunctional protein FolD</fullName>
    </recommendedName>
    <domain>
        <recommendedName>
            <fullName evidence="1">Methylenetetrahydrofolate dehydrogenase</fullName>
            <ecNumber evidence="1">1.5.1.5</ecNumber>
        </recommendedName>
    </domain>
    <domain>
        <recommendedName>
            <fullName evidence="1">Methenyltetrahydrofolate cyclohydrolase</fullName>
            <ecNumber evidence="1">3.5.4.9</ecNumber>
        </recommendedName>
    </domain>
</protein>
<name>FOLD_PYRAE</name>
<accession>Q8ZZK1</accession>
<organism>
    <name type="scientific">Pyrobaculum aerophilum (strain ATCC 51768 / DSM 7523 / JCM 9630 / CIP 104966 / NBRC 100827 / IM2)</name>
    <dbReference type="NCBI Taxonomy" id="178306"/>
    <lineage>
        <taxon>Archaea</taxon>
        <taxon>Thermoproteota</taxon>
        <taxon>Thermoprotei</taxon>
        <taxon>Thermoproteales</taxon>
        <taxon>Thermoproteaceae</taxon>
        <taxon>Pyrobaculum</taxon>
    </lineage>
</organism>
<gene>
    <name evidence="1" type="primary">folD</name>
    <name type="ordered locus">PAE0220</name>
</gene>
<keyword id="KW-0028">Amino-acid biosynthesis</keyword>
<keyword id="KW-0368">Histidine biosynthesis</keyword>
<keyword id="KW-0378">Hydrolase</keyword>
<keyword id="KW-0486">Methionine biosynthesis</keyword>
<keyword id="KW-0511">Multifunctional enzyme</keyword>
<keyword id="KW-0521">NADP</keyword>
<keyword id="KW-0554">One-carbon metabolism</keyword>
<keyword id="KW-0560">Oxidoreductase</keyword>
<keyword id="KW-0658">Purine biosynthesis</keyword>
<keyword id="KW-1185">Reference proteome</keyword>
<evidence type="ECO:0000255" key="1">
    <source>
        <dbReference type="HAMAP-Rule" id="MF_01576"/>
    </source>
</evidence>